<protein>
    <recommendedName>
        <fullName evidence="1">Elongation factor G</fullName>
        <shortName evidence="1">EF-G</shortName>
    </recommendedName>
</protein>
<name>EFG_LACDA</name>
<organism>
    <name type="scientific">Lactobacillus delbrueckii subsp. bulgaricus (strain ATCC 11842 / DSM 20081 / BCRC 10696 / JCM 1002 / NBRC 13953 / NCIMB 11778 / NCTC 12712 / WDCM 00102 / Lb 14)</name>
    <dbReference type="NCBI Taxonomy" id="390333"/>
    <lineage>
        <taxon>Bacteria</taxon>
        <taxon>Bacillati</taxon>
        <taxon>Bacillota</taxon>
        <taxon>Bacilli</taxon>
        <taxon>Lactobacillales</taxon>
        <taxon>Lactobacillaceae</taxon>
        <taxon>Lactobacillus</taxon>
    </lineage>
</organism>
<sequence>MANKREFSLEKTRNIGIMAHIDAGKTTTTERILYYTGKIHKIGETHEGDSQMDWMEEEKERGITITSAATTAQWKDHRINIIDTPGHVDFTIEVERSLRVLDGAVTVLDAQSGVEPQTENVWRQAENYGVPRIVFVNKMDKIGANFDFSVKSLHERLNANAIAVQMPIGAEDQFEGVIDLFDMVADVYDEDKLGAKWETIPVPDEYKEEAESRREEMIEEIAEVDDDIMEKFLGGEEISNEELKAALRRATLDLKAFPVFAGSAFKNKGVQMMLDGVVDYLPSPLDVKPYIAHDKEGNEVELLADDNKPFAALAFKIATDPFVGRLTFIRVYTGSLKSGSYVLNASKNQRERVGRLLQMHANSRTEIPEVFSGDIAGAIGLKDTTTGDSLTDPAHPLILESLDIPAPVIQVSVEPKSKADRDKMDVALQKLTEEDPTFRAETNPETGETLISGMGELHLDIMVERMKREFNVEATIGEPQVAYRETFTVPTQAQGKFVRQSGGKGQYGDVWIEFTPNEGKGYEFEDAIVGGVVPREYIPSVDAGLQEAMKNGVLAGYPLIDVKAKLYDGSYHEVDSSEAAFKVAASLALKNAASKAGAVILEPIMKVQVIAPEEYLGDVMGSITARRGQMEGMEDRAGAKVINAMVPLSEMFGYATTLRSSTQGRGTFTMVMDHYSPCPKSIQAEIIKKRGGNA</sequence>
<keyword id="KW-0963">Cytoplasm</keyword>
<keyword id="KW-0251">Elongation factor</keyword>
<keyword id="KW-0342">GTP-binding</keyword>
<keyword id="KW-0547">Nucleotide-binding</keyword>
<keyword id="KW-0648">Protein biosynthesis</keyword>
<keyword id="KW-1185">Reference proteome</keyword>
<dbReference type="EMBL" id="CR954253">
    <property type="protein sequence ID" value="CAI97229.1"/>
    <property type="molecule type" value="Genomic_DNA"/>
</dbReference>
<dbReference type="RefSeq" id="WP_003622465.1">
    <property type="nucleotide sequence ID" value="NZ_JQAV01000001.1"/>
</dbReference>
<dbReference type="SMR" id="Q1GBM0"/>
<dbReference type="STRING" id="390333.Ldb0394"/>
<dbReference type="KEGG" id="ldb:Ldb0394"/>
<dbReference type="PATRIC" id="fig|390333.13.peg.396"/>
<dbReference type="eggNOG" id="COG0480">
    <property type="taxonomic scope" value="Bacteria"/>
</dbReference>
<dbReference type="HOGENOM" id="CLU_002794_4_1_9"/>
<dbReference type="BioCyc" id="LDEL390333:LDB_RS01665-MONOMER"/>
<dbReference type="Proteomes" id="UP000001259">
    <property type="component" value="Chromosome"/>
</dbReference>
<dbReference type="GO" id="GO:0005737">
    <property type="term" value="C:cytoplasm"/>
    <property type="evidence" value="ECO:0007669"/>
    <property type="project" value="UniProtKB-SubCell"/>
</dbReference>
<dbReference type="GO" id="GO:0005525">
    <property type="term" value="F:GTP binding"/>
    <property type="evidence" value="ECO:0007669"/>
    <property type="project" value="UniProtKB-UniRule"/>
</dbReference>
<dbReference type="GO" id="GO:0003924">
    <property type="term" value="F:GTPase activity"/>
    <property type="evidence" value="ECO:0007669"/>
    <property type="project" value="InterPro"/>
</dbReference>
<dbReference type="GO" id="GO:0003746">
    <property type="term" value="F:translation elongation factor activity"/>
    <property type="evidence" value="ECO:0007669"/>
    <property type="project" value="UniProtKB-UniRule"/>
</dbReference>
<dbReference type="GO" id="GO:0032790">
    <property type="term" value="P:ribosome disassembly"/>
    <property type="evidence" value="ECO:0007669"/>
    <property type="project" value="TreeGrafter"/>
</dbReference>
<dbReference type="CDD" id="cd01886">
    <property type="entry name" value="EF-G"/>
    <property type="match status" value="1"/>
</dbReference>
<dbReference type="CDD" id="cd16262">
    <property type="entry name" value="EFG_III"/>
    <property type="match status" value="1"/>
</dbReference>
<dbReference type="CDD" id="cd01434">
    <property type="entry name" value="EFG_mtEFG1_IV"/>
    <property type="match status" value="1"/>
</dbReference>
<dbReference type="CDD" id="cd03713">
    <property type="entry name" value="EFG_mtEFG_C"/>
    <property type="match status" value="1"/>
</dbReference>
<dbReference type="CDD" id="cd04088">
    <property type="entry name" value="EFG_mtEFG_II"/>
    <property type="match status" value="1"/>
</dbReference>
<dbReference type="FunFam" id="2.40.30.10:FF:000006">
    <property type="entry name" value="Elongation factor G"/>
    <property type="match status" value="1"/>
</dbReference>
<dbReference type="FunFam" id="3.30.230.10:FF:000003">
    <property type="entry name" value="Elongation factor G"/>
    <property type="match status" value="1"/>
</dbReference>
<dbReference type="FunFam" id="3.30.70.240:FF:000001">
    <property type="entry name" value="Elongation factor G"/>
    <property type="match status" value="1"/>
</dbReference>
<dbReference type="FunFam" id="3.30.70.870:FF:000001">
    <property type="entry name" value="Elongation factor G"/>
    <property type="match status" value="1"/>
</dbReference>
<dbReference type="FunFam" id="3.40.50.300:FF:000029">
    <property type="entry name" value="Elongation factor G"/>
    <property type="match status" value="1"/>
</dbReference>
<dbReference type="Gene3D" id="3.30.230.10">
    <property type="match status" value="1"/>
</dbReference>
<dbReference type="Gene3D" id="3.30.70.240">
    <property type="match status" value="1"/>
</dbReference>
<dbReference type="Gene3D" id="3.30.70.870">
    <property type="entry name" value="Elongation Factor G (Translational Gtpase), domain 3"/>
    <property type="match status" value="1"/>
</dbReference>
<dbReference type="Gene3D" id="3.40.50.300">
    <property type="entry name" value="P-loop containing nucleotide triphosphate hydrolases"/>
    <property type="match status" value="1"/>
</dbReference>
<dbReference type="Gene3D" id="2.40.30.10">
    <property type="entry name" value="Translation factors"/>
    <property type="match status" value="1"/>
</dbReference>
<dbReference type="HAMAP" id="MF_00054_B">
    <property type="entry name" value="EF_G_EF_2_B"/>
    <property type="match status" value="1"/>
</dbReference>
<dbReference type="InterPro" id="IPR041095">
    <property type="entry name" value="EFG_II"/>
</dbReference>
<dbReference type="InterPro" id="IPR009022">
    <property type="entry name" value="EFG_III"/>
</dbReference>
<dbReference type="InterPro" id="IPR035647">
    <property type="entry name" value="EFG_III/V"/>
</dbReference>
<dbReference type="InterPro" id="IPR047872">
    <property type="entry name" value="EFG_IV"/>
</dbReference>
<dbReference type="InterPro" id="IPR035649">
    <property type="entry name" value="EFG_V"/>
</dbReference>
<dbReference type="InterPro" id="IPR000640">
    <property type="entry name" value="EFG_V-like"/>
</dbReference>
<dbReference type="InterPro" id="IPR004161">
    <property type="entry name" value="EFTu-like_2"/>
</dbReference>
<dbReference type="InterPro" id="IPR031157">
    <property type="entry name" value="G_TR_CS"/>
</dbReference>
<dbReference type="InterPro" id="IPR027417">
    <property type="entry name" value="P-loop_NTPase"/>
</dbReference>
<dbReference type="InterPro" id="IPR020568">
    <property type="entry name" value="Ribosomal_Su5_D2-typ_SF"/>
</dbReference>
<dbReference type="InterPro" id="IPR014721">
    <property type="entry name" value="Ribsml_uS5_D2-typ_fold_subgr"/>
</dbReference>
<dbReference type="InterPro" id="IPR005225">
    <property type="entry name" value="Small_GTP-bd"/>
</dbReference>
<dbReference type="InterPro" id="IPR000795">
    <property type="entry name" value="T_Tr_GTP-bd_dom"/>
</dbReference>
<dbReference type="InterPro" id="IPR009000">
    <property type="entry name" value="Transl_B-barrel_sf"/>
</dbReference>
<dbReference type="InterPro" id="IPR004540">
    <property type="entry name" value="Transl_elong_EFG/EF2"/>
</dbReference>
<dbReference type="InterPro" id="IPR005517">
    <property type="entry name" value="Transl_elong_EFG/EF2_IV"/>
</dbReference>
<dbReference type="NCBIfam" id="TIGR00484">
    <property type="entry name" value="EF-G"/>
    <property type="match status" value="1"/>
</dbReference>
<dbReference type="NCBIfam" id="NF009379">
    <property type="entry name" value="PRK12740.1-3"/>
    <property type="match status" value="1"/>
</dbReference>
<dbReference type="NCBIfam" id="NF009381">
    <property type="entry name" value="PRK12740.1-5"/>
    <property type="match status" value="1"/>
</dbReference>
<dbReference type="NCBIfam" id="TIGR00231">
    <property type="entry name" value="small_GTP"/>
    <property type="match status" value="1"/>
</dbReference>
<dbReference type="PANTHER" id="PTHR43261:SF1">
    <property type="entry name" value="RIBOSOME-RELEASING FACTOR 2, MITOCHONDRIAL"/>
    <property type="match status" value="1"/>
</dbReference>
<dbReference type="PANTHER" id="PTHR43261">
    <property type="entry name" value="TRANSLATION ELONGATION FACTOR G-RELATED"/>
    <property type="match status" value="1"/>
</dbReference>
<dbReference type="Pfam" id="PF00679">
    <property type="entry name" value="EFG_C"/>
    <property type="match status" value="1"/>
</dbReference>
<dbReference type="Pfam" id="PF14492">
    <property type="entry name" value="EFG_III"/>
    <property type="match status" value="1"/>
</dbReference>
<dbReference type="Pfam" id="PF03764">
    <property type="entry name" value="EFG_IV"/>
    <property type="match status" value="1"/>
</dbReference>
<dbReference type="Pfam" id="PF00009">
    <property type="entry name" value="GTP_EFTU"/>
    <property type="match status" value="1"/>
</dbReference>
<dbReference type="Pfam" id="PF03144">
    <property type="entry name" value="GTP_EFTU_D2"/>
    <property type="match status" value="1"/>
</dbReference>
<dbReference type="PRINTS" id="PR00315">
    <property type="entry name" value="ELONGATNFCT"/>
</dbReference>
<dbReference type="SMART" id="SM00838">
    <property type="entry name" value="EFG_C"/>
    <property type="match status" value="1"/>
</dbReference>
<dbReference type="SMART" id="SM00889">
    <property type="entry name" value="EFG_IV"/>
    <property type="match status" value="1"/>
</dbReference>
<dbReference type="SUPFAM" id="SSF54980">
    <property type="entry name" value="EF-G C-terminal domain-like"/>
    <property type="match status" value="2"/>
</dbReference>
<dbReference type="SUPFAM" id="SSF52540">
    <property type="entry name" value="P-loop containing nucleoside triphosphate hydrolases"/>
    <property type="match status" value="1"/>
</dbReference>
<dbReference type="SUPFAM" id="SSF54211">
    <property type="entry name" value="Ribosomal protein S5 domain 2-like"/>
    <property type="match status" value="1"/>
</dbReference>
<dbReference type="SUPFAM" id="SSF50447">
    <property type="entry name" value="Translation proteins"/>
    <property type="match status" value="1"/>
</dbReference>
<dbReference type="PROSITE" id="PS00301">
    <property type="entry name" value="G_TR_1"/>
    <property type="match status" value="1"/>
</dbReference>
<dbReference type="PROSITE" id="PS51722">
    <property type="entry name" value="G_TR_2"/>
    <property type="match status" value="1"/>
</dbReference>
<evidence type="ECO:0000255" key="1">
    <source>
        <dbReference type="HAMAP-Rule" id="MF_00054"/>
    </source>
</evidence>
<gene>
    <name evidence="1" type="primary">fusA</name>
    <name type="ordered locus">Ldb0394</name>
</gene>
<feature type="chain" id="PRO_0000263463" description="Elongation factor G">
    <location>
        <begin position="1"/>
        <end position="694"/>
    </location>
</feature>
<feature type="domain" description="tr-type G">
    <location>
        <begin position="10"/>
        <end position="285"/>
    </location>
</feature>
<feature type="binding site" evidence="1">
    <location>
        <begin position="19"/>
        <end position="26"/>
    </location>
    <ligand>
        <name>GTP</name>
        <dbReference type="ChEBI" id="CHEBI:37565"/>
    </ligand>
</feature>
<feature type="binding site" evidence="1">
    <location>
        <begin position="83"/>
        <end position="87"/>
    </location>
    <ligand>
        <name>GTP</name>
        <dbReference type="ChEBI" id="CHEBI:37565"/>
    </ligand>
</feature>
<feature type="binding site" evidence="1">
    <location>
        <begin position="137"/>
        <end position="140"/>
    </location>
    <ligand>
        <name>GTP</name>
        <dbReference type="ChEBI" id="CHEBI:37565"/>
    </ligand>
</feature>
<reference key="1">
    <citation type="journal article" date="2006" name="Proc. Natl. Acad. Sci. U.S.A.">
        <title>The complete genome sequence of Lactobacillus bulgaricus reveals extensive and ongoing reductive evolution.</title>
        <authorList>
            <person name="van de Guchte M."/>
            <person name="Penaud S."/>
            <person name="Grimaldi C."/>
            <person name="Barbe V."/>
            <person name="Bryson K."/>
            <person name="Nicolas P."/>
            <person name="Robert C."/>
            <person name="Oztas S."/>
            <person name="Mangenot S."/>
            <person name="Couloux A."/>
            <person name="Loux V."/>
            <person name="Dervyn R."/>
            <person name="Bossy R."/>
            <person name="Bolotin A."/>
            <person name="Batto J.-M."/>
            <person name="Walunas T."/>
            <person name="Gibrat J.-F."/>
            <person name="Bessieres P."/>
            <person name="Weissenbach J."/>
            <person name="Ehrlich S.D."/>
            <person name="Maguin E."/>
        </authorList>
    </citation>
    <scope>NUCLEOTIDE SEQUENCE [LARGE SCALE GENOMIC DNA]</scope>
    <source>
        <strain>ATCC 11842 / DSM 20081 / BCRC 10696 / JCM 1002 / NBRC 13953 / NCIMB 11778 / NCTC 12712 / WDCM 00102 / Lb 14</strain>
    </source>
</reference>
<accession>Q1GBM0</accession>
<comment type="function">
    <text evidence="1">Catalyzes the GTP-dependent ribosomal translocation step during translation elongation. During this step, the ribosome changes from the pre-translocational (PRE) to the post-translocational (POST) state as the newly formed A-site-bound peptidyl-tRNA and P-site-bound deacylated tRNA move to the P and E sites, respectively. Catalyzes the coordinated movement of the two tRNA molecules, the mRNA and conformational changes in the ribosome.</text>
</comment>
<comment type="subcellular location">
    <subcellularLocation>
        <location evidence="1">Cytoplasm</location>
    </subcellularLocation>
</comment>
<comment type="similarity">
    <text evidence="1">Belongs to the TRAFAC class translation factor GTPase superfamily. Classic translation factor GTPase family. EF-G/EF-2 subfamily.</text>
</comment>
<proteinExistence type="inferred from homology"/>